<feature type="chain" id="PRO_1000085148" description="Chaperone protein DnaJ">
    <location>
        <begin position="1"/>
        <end position="375"/>
    </location>
</feature>
<feature type="domain" description="J" evidence="1">
    <location>
        <begin position="5"/>
        <end position="70"/>
    </location>
</feature>
<feature type="repeat" description="CXXCXGXG motif">
    <location>
        <begin position="143"/>
        <end position="150"/>
    </location>
</feature>
<feature type="repeat" description="CXXCXGXG motif">
    <location>
        <begin position="160"/>
        <end position="167"/>
    </location>
</feature>
<feature type="repeat" description="CXXCXGXG motif">
    <location>
        <begin position="182"/>
        <end position="189"/>
    </location>
</feature>
<feature type="repeat" description="CXXCXGXG motif">
    <location>
        <begin position="196"/>
        <end position="203"/>
    </location>
</feature>
<feature type="zinc finger region" description="CR-type" evidence="1">
    <location>
        <begin position="130"/>
        <end position="208"/>
    </location>
</feature>
<feature type="binding site" evidence="1">
    <location>
        <position position="143"/>
    </location>
    <ligand>
        <name>Zn(2+)</name>
        <dbReference type="ChEBI" id="CHEBI:29105"/>
        <label>1</label>
    </ligand>
</feature>
<feature type="binding site" evidence="1">
    <location>
        <position position="146"/>
    </location>
    <ligand>
        <name>Zn(2+)</name>
        <dbReference type="ChEBI" id="CHEBI:29105"/>
        <label>1</label>
    </ligand>
</feature>
<feature type="binding site" evidence="1">
    <location>
        <position position="160"/>
    </location>
    <ligand>
        <name>Zn(2+)</name>
        <dbReference type="ChEBI" id="CHEBI:29105"/>
        <label>2</label>
    </ligand>
</feature>
<feature type="binding site" evidence="1">
    <location>
        <position position="163"/>
    </location>
    <ligand>
        <name>Zn(2+)</name>
        <dbReference type="ChEBI" id="CHEBI:29105"/>
        <label>2</label>
    </ligand>
</feature>
<feature type="binding site" evidence="1">
    <location>
        <position position="182"/>
    </location>
    <ligand>
        <name>Zn(2+)</name>
        <dbReference type="ChEBI" id="CHEBI:29105"/>
        <label>2</label>
    </ligand>
</feature>
<feature type="binding site" evidence="1">
    <location>
        <position position="185"/>
    </location>
    <ligand>
        <name>Zn(2+)</name>
        <dbReference type="ChEBI" id="CHEBI:29105"/>
        <label>2</label>
    </ligand>
</feature>
<feature type="binding site" evidence="1">
    <location>
        <position position="196"/>
    </location>
    <ligand>
        <name>Zn(2+)</name>
        <dbReference type="ChEBI" id="CHEBI:29105"/>
        <label>1</label>
    </ligand>
</feature>
<feature type="binding site" evidence="1">
    <location>
        <position position="199"/>
    </location>
    <ligand>
        <name>Zn(2+)</name>
        <dbReference type="ChEBI" id="CHEBI:29105"/>
        <label>1</label>
    </ligand>
</feature>
<reference key="1">
    <citation type="journal article" date="2005" name="Genome Res.">
        <title>Genome sequence of Blochmannia pennsylvanicus indicates parallel evolutionary trends among bacterial mutualists of insects.</title>
        <authorList>
            <person name="Degnan P.H."/>
            <person name="Lazarus A.B."/>
            <person name="Wernegreen J.J."/>
        </authorList>
    </citation>
    <scope>NUCLEOTIDE SEQUENCE [LARGE SCALE GENOMIC DNA]</scope>
    <source>
        <strain>BPEN</strain>
    </source>
</reference>
<dbReference type="EMBL" id="CP000016">
    <property type="protein sequence ID" value="AAZ40759.1"/>
    <property type="molecule type" value="Genomic_DNA"/>
</dbReference>
<dbReference type="RefSeq" id="WP_011282666.1">
    <property type="nucleotide sequence ID" value="NC_007292.1"/>
</dbReference>
<dbReference type="SMR" id="Q493S6"/>
<dbReference type="STRING" id="291272.BPEN_119"/>
<dbReference type="KEGG" id="bpn:BPEN_119"/>
<dbReference type="eggNOG" id="COG0484">
    <property type="taxonomic scope" value="Bacteria"/>
</dbReference>
<dbReference type="HOGENOM" id="CLU_017633_0_7_6"/>
<dbReference type="OrthoDB" id="9779889at2"/>
<dbReference type="Proteomes" id="UP000007794">
    <property type="component" value="Chromosome"/>
</dbReference>
<dbReference type="GO" id="GO:0005737">
    <property type="term" value="C:cytoplasm"/>
    <property type="evidence" value="ECO:0007669"/>
    <property type="project" value="UniProtKB-SubCell"/>
</dbReference>
<dbReference type="GO" id="GO:0005524">
    <property type="term" value="F:ATP binding"/>
    <property type="evidence" value="ECO:0007669"/>
    <property type="project" value="InterPro"/>
</dbReference>
<dbReference type="GO" id="GO:0031072">
    <property type="term" value="F:heat shock protein binding"/>
    <property type="evidence" value="ECO:0007669"/>
    <property type="project" value="InterPro"/>
</dbReference>
<dbReference type="GO" id="GO:0051082">
    <property type="term" value="F:unfolded protein binding"/>
    <property type="evidence" value="ECO:0007669"/>
    <property type="project" value="UniProtKB-UniRule"/>
</dbReference>
<dbReference type="GO" id="GO:0008270">
    <property type="term" value="F:zinc ion binding"/>
    <property type="evidence" value="ECO:0007669"/>
    <property type="project" value="UniProtKB-UniRule"/>
</dbReference>
<dbReference type="GO" id="GO:0051085">
    <property type="term" value="P:chaperone cofactor-dependent protein refolding"/>
    <property type="evidence" value="ECO:0007669"/>
    <property type="project" value="TreeGrafter"/>
</dbReference>
<dbReference type="GO" id="GO:0006260">
    <property type="term" value="P:DNA replication"/>
    <property type="evidence" value="ECO:0007669"/>
    <property type="project" value="UniProtKB-KW"/>
</dbReference>
<dbReference type="GO" id="GO:0042026">
    <property type="term" value="P:protein refolding"/>
    <property type="evidence" value="ECO:0007669"/>
    <property type="project" value="TreeGrafter"/>
</dbReference>
<dbReference type="GO" id="GO:0009408">
    <property type="term" value="P:response to heat"/>
    <property type="evidence" value="ECO:0007669"/>
    <property type="project" value="InterPro"/>
</dbReference>
<dbReference type="CDD" id="cd06257">
    <property type="entry name" value="DnaJ"/>
    <property type="match status" value="1"/>
</dbReference>
<dbReference type="CDD" id="cd10747">
    <property type="entry name" value="DnaJ_C"/>
    <property type="match status" value="1"/>
</dbReference>
<dbReference type="CDD" id="cd10719">
    <property type="entry name" value="DnaJ_zf"/>
    <property type="match status" value="1"/>
</dbReference>
<dbReference type="FunFam" id="1.10.287.110:FF:000034">
    <property type="entry name" value="Chaperone protein DnaJ"/>
    <property type="match status" value="1"/>
</dbReference>
<dbReference type="FunFam" id="2.10.230.10:FF:000002">
    <property type="entry name" value="Molecular chaperone DnaJ"/>
    <property type="match status" value="1"/>
</dbReference>
<dbReference type="FunFam" id="2.60.260.20:FF:000004">
    <property type="entry name" value="Molecular chaperone DnaJ"/>
    <property type="match status" value="1"/>
</dbReference>
<dbReference type="Gene3D" id="1.10.287.110">
    <property type="entry name" value="DnaJ domain"/>
    <property type="match status" value="1"/>
</dbReference>
<dbReference type="Gene3D" id="2.10.230.10">
    <property type="entry name" value="Heat shock protein DnaJ, cysteine-rich domain"/>
    <property type="match status" value="1"/>
</dbReference>
<dbReference type="Gene3D" id="2.60.260.20">
    <property type="entry name" value="Urease metallochaperone UreE, N-terminal domain"/>
    <property type="match status" value="2"/>
</dbReference>
<dbReference type="HAMAP" id="MF_01152">
    <property type="entry name" value="DnaJ"/>
    <property type="match status" value="1"/>
</dbReference>
<dbReference type="InterPro" id="IPR012724">
    <property type="entry name" value="DnaJ"/>
</dbReference>
<dbReference type="InterPro" id="IPR002939">
    <property type="entry name" value="DnaJ_C"/>
</dbReference>
<dbReference type="InterPro" id="IPR001623">
    <property type="entry name" value="DnaJ_domain"/>
</dbReference>
<dbReference type="InterPro" id="IPR018253">
    <property type="entry name" value="DnaJ_domain_CS"/>
</dbReference>
<dbReference type="InterPro" id="IPR008971">
    <property type="entry name" value="HSP40/DnaJ_pept-bd"/>
</dbReference>
<dbReference type="InterPro" id="IPR001305">
    <property type="entry name" value="HSP_DnaJ_Cys-rich_dom"/>
</dbReference>
<dbReference type="InterPro" id="IPR036410">
    <property type="entry name" value="HSP_DnaJ_Cys-rich_dom_sf"/>
</dbReference>
<dbReference type="InterPro" id="IPR036869">
    <property type="entry name" value="J_dom_sf"/>
</dbReference>
<dbReference type="NCBIfam" id="TIGR02349">
    <property type="entry name" value="DnaJ_bact"/>
    <property type="match status" value="1"/>
</dbReference>
<dbReference type="NCBIfam" id="NF008035">
    <property type="entry name" value="PRK10767.1"/>
    <property type="match status" value="1"/>
</dbReference>
<dbReference type="PANTHER" id="PTHR43096:SF48">
    <property type="entry name" value="CHAPERONE PROTEIN DNAJ"/>
    <property type="match status" value="1"/>
</dbReference>
<dbReference type="PANTHER" id="PTHR43096">
    <property type="entry name" value="DNAJ HOMOLOG 1, MITOCHONDRIAL-RELATED"/>
    <property type="match status" value="1"/>
</dbReference>
<dbReference type="Pfam" id="PF00226">
    <property type="entry name" value="DnaJ"/>
    <property type="match status" value="1"/>
</dbReference>
<dbReference type="Pfam" id="PF01556">
    <property type="entry name" value="DnaJ_C"/>
    <property type="match status" value="1"/>
</dbReference>
<dbReference type="Pfam" id="PF00684">
    <property type="entry name" value="DnaJ_CXXCXGXG"/>
    <property type="match status" value="1"/>
</dbReference>
<dbReference type="PRINTS" id="PR00625">
    <property type="entry name" value="JDOMAIN"/>
</dbReference>
<dbReference type="SMART" id="SM00271">
    <property type="entry name" value="DnaJ"/>
    <property type="match status" value="1"/>
</dbReference>
<dbReference type="SUPFAM" id="SSF46565">
    <property type="entry name" value="Chaperone J-domain"/>
    <property type="match status" value="1"/>
</dbReference>
<dbReference type="SUPFAM" id="SSF57938">
    <property type="entry name" value="DnaJ/Hsp40 cysteine-rich domain"/>
    <property type="match status" value="1"/>
</dbReference>
<dbReference type="SUPFAM" id="SSF49493">
    <property type="entry name" value="HSP40/DnaJ peptide-binding domain"/>
    <property type="match status" value="2"/>
</dbReference>
<dbReference type="PROSITE" id="PS00636">
    <property type="entry name" value="DNAJ_1"/>
    <property type="match status" value="1"/>
</dbReference>
<dbReference type="PROSITE" id="PS50076">
    <property type="entry name" value="DNAJ_2"/>
    <property type="match status" value="1"/>
</dbReference>
<dbReference type="PROSITE" id="PS51188">
    <property type="entry name" value="ZF_CR"/>
    <property type="match status" value="1"/>
</dbReference>
<comment type="function">
    <text evidence="1">Participates actively in the response to hyperosmotic and heat shock by preventing the aggregation of stress-denatured proteins and by disaggregating proteins, also in an autonomous, DnaK-independent fashion. Unfolded proteins bind initially to DnaJ; upon interaction with the DnaJ-bound protein, DnaK hydrolyzes its bound ATP, resulting in the formation of a stable complex. GrpE releases ADP from DnaK; ATP binding to DnaK triggers the release of the substrate protein, thus completing the reaction cycle. Several rounds of ATP-dependent interactions between DnaJ, DnaK and GrpE are required for fully efficient folding. Also involved, together with DnaK and GrpE, in the DNA replication of plasmids through activation of initiation proteins.</text>
</comment>
<comment type="cofactor">
    <cofactor evidence="1">
        <name>Zn(2+)</name>
        <dbReference type="ChEBI" id="CHEBI:29105"/>
    </cofactor>
    <text evidence="1">Binds 2 Zn(2+) ions per monomer.</text>
</comment>
<comment type="subunit">
    <text evidence="1">Homodimer.</text>
</comment>
<comment type="subcellular location">
    <subcellularLocation>
        <location evidence="1">Cytoplasm</location>
    </subcellularLocation>
</comment>
<comment type="domain">
    <text evidence="1">The J domain is necessary and sufficient to stimulate DnaK ATPase activity. Zinc center 1 plays an important role in the autonomous, DnaK-independent chaperone activity of DnaJ. Zinc center 2 is essential for interaction with DnaK and for DnaJ activity.</text>
</comment>
<comment type="similarity">
    <text evidence="1">Belongs to the DnaJ family.</text>
</comment>
<sequence length="375" mass="41233">MAKSDYYEILGISKNADEREIKKSYKRLAMKFHPDRNPGNTTAETKFKEIKEAYEVLSNSEKRAAYDQYGHAAFESGSMGATSNSGGADFSDIFGDVFGDIFGGNRRSRAGRGSDLRYNIELSLEDAVRGIIKEICIPTLSTCEKCRGTGARSNAAIITCMTCHGQGQVQIRQGFFSVQQSCPTCHGHGKIIKEACNKCHGNGRVERSKTLSVKIPSGVNTGDRIRLSGEGESGKNGAPSGDLYVQIQIRKHPIFDREEKNLYCEVPISFSMAALGGEIEVPTLDGRVKLKIPPETQTGKLFRMRGKGVKSVRSGGNGDLLCRVVVETPVKLNDIQKRLLQDLSDSFEGPHGNRNSPRSKSFFDGVKKFFDDLTR</sequence>
<proteinExistence type="inferred from homology"/>
<organism>
    <name type="scientific">Blochmanniella pennsylvanica (strain BPEN)</name>
    <dbReference type="NCBI Taxonomy" id="291272"/>
    <lineage>
        <taxon>Bacteria</taxon>
        <taxon>Pseudomonadati</taxon>
        <taxon>Pseudomonadota</taxon>
        <taxon>Gammaproteobacteria</taxon>
        <taxon>Enterobacterales</taxon>
        <taxon>Enterobacteriaceae</taxon>
        <taxon>ant endosymbionts</taxon>
        <taxon>Candidatus Blochmanniella</taxon>
    </lineage>
</organism>
<keyword id="KW-0143">Chaperone</keyword>
<keyword id="KW-0963">Cytoplasm</keyword>
<keyword id="KW-0235">DNA replication</keyword>
<keyword id="KW-0479">Metal-binding</keyword>
<keyword id="KW-1185">Reference proteome</keyword>
<keyword id="KW-0677">Repeat</keyword>
<keyword id="KW-0346">Stress response</keyword>
<keyword id="KW-0862">Zinc</keyword>
<keyword id="KW-0863">Zinc-finger</keyword>
<name>DNAJ_BLOPB</name>
<accession>Q493S6</accession>
<protein>
    <recommendedName>
        <fullName evidence="1">Chaperone protein DnaJ</fullName>
    </recommendedName>
</protein>
<evidence type="ECO:0000255" key="1">
    <source>
        <dbReference type="HAMAP-Rule" id="MF_01152"/>
    </source>
</evidence>
<gene>
    <name evidence="1" type="primary">dnaJ</name>
    <name type="ordered locus">BPEN_119</name>
</gene>